<proteinExistence type="inferred from homology"/>
<feature type="chain" id="PRO_0000252742" description="Phosphoribosylformylglycinamidine synthase subunit PurQ">
    <location>
        <begin position="1"/>
        <end position="224"/>
    </location>
</feature>
<feature type="domain" description="Glutamine amidotransferase type-1" evidence="1">
    <location>
        <begin position="2"/>
        <end position="224"/>
    </location>
</feature>
<feature type="active site" description="Nucleophile" evidence="1">
    <location>
        <position position="86"/>
    </location>
</feature>
<feature type="active site" evidence="1">
    <location>
        <position position="200"/>
    </location>
</feature>
<feature type="active site" evidence="1">
    <location>
        <position position="202"/>
    </location>
</feature>
<gene>
    <name evidence="1" type="primary">purQ</name>
    <name type="ordered locus">Suden_0489</name>
</gene>
<accession>Q30TB2</accession>
<keyword id="KW-0067">ATP-binding</keyword>
<keyword id="KW-0963">Cytoplasm</keyword>
<keyword id="KW-0315">Glutamine amidotransferase</keyword>
<keyword id="KW-0378">Hydrolase</keyword>
<keyword id="KW-0436">Ligase</keyword>
<keyword id="KW-0547">Nucleotide-binding</keyword>
<keyword id="KW-0658">Purine biosynthesis</keyword>
<keyword id="KW-1185">Reference proteome</keyword>
<evidence type="ECO:0000255" key="1">
    <source>
        <dbReference type="HAMAP-Rule" id="MF_00421"/>
    </source>
</evidence>
<comment type="function">
    <text evidence="1">Part of the phosphoribosylformylglycinamidine synthase complex involved in the purines biosynthetic pathway. Catalyzes the ATP-dependent conversion of formylglycinamide ribonucleotide (FGAR) and glutamine to yield formylglycinamidine ribonucleotide (FGAM) and glutamate. The FGAM synthase complex is composed of three subunits. PurQ produces an ammonia molecule by converting glutamine to glutamate. PurL transfers the ammonia molecule to FGAR to form FGAM in an ATP-dependent manner. PurS interacts with PurQ and PurL and is thought to assist in the transfer of the ammonia molecule from PurQ to PurL.</text>
</comment>
<comment type="catalytic activity">
    <reaction evidence="1">
        <text>N(2)-formyl-N(1)-(5-phospho-beta-D-ribosyl)glycinamide + L-glutamine + ATP + H2O = 2-formamido-N(1)-(5-O-phospho-beta-D-ribosyl)acetamidine + L-glutamate + ADP + phosphate + H(+)</text>
        <dbReference type="Rhea" id="RHEA:17129"/>
        <dbReference type="ChEBI" id="CHEBI:15377"/>
        <dbReference type="ChEBI" id="CHEBI:15378"/>
        <dbReference type="ChEBI" id="CHEBI:29985"/>
        <dbReference type="ChEBI" id="CHEBI:30616"/>
        <dbReference type="ChEBI" id="CHEBI:43474"/>
        <dbReference type="ChEBI" id="CHEBI:58359"/>
        <dbReference type="ChEBI" id="CHEBI:147286"/>
        <dbReference type="ChEBI" id="CHEBI:147287"/>
        <dbReference type="ChEBI" id="CHEBI:456216"/>
        <dbReference type="EC" id="6.3.5.3"/>
    </reaction>
</comment>
<comment type="catalytic activity">
    <reaction evidence="1">
        <text>L-glutamine + H2O = L-glutamate + NH4(+)</text>
        <dbReference type="Rhea" id="RHEA:15889"/>
        <dbReference type="ChEBI" id="CHEBI:15377"/>
        <dbReference type="ChEBI" id="CHEBI:28938"/>
        <dbReference type="ChEBI" id="CHEBI:29985"/>
        <dbReference type="ChEBI" id="CHEBI:58359"/>
        <dbReference type="EC" id="3.5.1.2"/>
    </reaction>
</comment>
<comment type="pathway">
    <text evidence="1">Purine metabolism; IMP biosynthesis via de novo pathway; 5-amino-1-(5-phospho-D-ribosyl)imidazole from N(2)-formyl-N(1)-(5-phospho-D-ribosyl)glycinamide: step 1/2.</text>
</comment>
<comment type="subunit">
    <text evidence="1">Part of the FGAM synthase complex composed of 1 PurL, 1 PurQ and 2 PurS subunits.</text>
</comment>
<comment type="subcellular location">
    <subcellularLocation>
        <location evidence="1">Cytoplasm</location>
    </subcellularLocation>
</comment>
<sequence>MKVTILQFPGTNCEYDAQHAFKSLGAETEILWHKSDTIPSDTDLLIVAGGFSYGDYLRSGAIAKFSPVMKAVIKYADDGGKVLGICNGFQVLTESGLLPGALKRNESLHFLSKHHHLKVINNENIFLEKLDKGDIVNIPIAHHDGNYYIDDSGLKELYANNQVLLKYCDENGNDKNPNGSIDSIAGICNKERNVFGLMPHPERAMEAILGSDDGIKMLQGFLRA</sequence>
<organism>
    <name type="scientific">Sulfurimonas denitrificans (strain ATCC 33889 / DSM 1251)</name>
    <name type="common">Thiomicrospira denitrificans (strain ATCC 33889 / DSM 1251)</name>
    <dbReference type="NCBI Taxonomy" id="326298"/>
    <lineage>
        <taxon>Bacteria</taxon>
        <taxon>Pseudomonadati</taxon>
        <taxon>Campylobacterota</taxon>
        <taxon>Epsilonproteobacteria</taxon>
        <taxon>Campylobacterales</taxon>
        <taxon>Sulfurimonadaceae</taxon>
        <taxon>Sulfurimonas</taxon>
    </lineage>
</organism>
<reference key="1">
    <citation type="journal article" date="2008" name="Appl. Environ. Microbiol.">
        <title>Genome of the epsilonproteobacterial chemolithoautotroph Sulfurimonas denitrificans.</title>
        <authorList>
            <person name="Sievert S.M."/>
            <person name="Scott K.M."/>
            <person name="Klotz M.G."/>
            <person name="Chain P.S.G."/>
            <person name="Hauser L.J."/>
            <person name="Hemp J."/>
            <person name="Huegler M."/>
            <person name="Land M."/>
            <person name="Lapidus A."/>
            <person name="Larimer F.W."/>
            <person name="Lucas S."/>
            <person name="Malfatti S.A."/>
            <person name="Meyer F."/>
            <person name="Paulsen I.T."/>
            <person name="Ren Q."/>
            <person name="Simon J."/>
            <person name="Bailey K."/>
            <person name="Diaz E."/>
            <person name="Fitzpatrick K.A."/>
            <person name="Glover B."/>
            <person name="Gwatney N."/>
            <person name="Korajkic A."/>
            <person name="Long A."/>
            <person name="Mobberley J.M."/>
            <person name="Pantry S.N."/>
            <person name="Pazder G."/>
            <person name="Peterson S."/>
            <person name="Quintanilla J.D."/>
            <person name="Sprinkle R."/>
            <person name="Stephens J."/>
            <person name="Thomas P."/>
            <person name="Vaughn R."/>
            <person name="Weber M.J."/>
            <person name="Wooten L.L."/>
        </authorList>
    </citation>
    <scope>NUCLEOTIDE SEQUENCE [LARGE SCALE GENOMIC DNA]</scope>
    <source>
        <strain>ATCC 33889 / DSM 1251</strain>
    </source>
</reference>
<dbReference type="EC" id="6.3.5.3" evidence="1"/>
<dbReference type="EC" id="3.5.1.2" evidence="1"/>
<dbReference type="EMBL" id="CP000153">
    <property type="protein sequence ID" value="ABB43769.1"/>
    <property type="molecule type" value="Genomic_DNA"/>
</dbReference>
<dbReference type="RefSeq" id="WP_011372123.1">
    <property type="nucleotide sequence ID" value="NC_007575.1"/>
</dbReference>
<dbReference type="SMR" id="Q30TB2"/>
<dbReference type="STRING" id="326298.Suden_0489"/>
<dbReference type="KEGG" id="tdn:Suden_0489"/>
<dbReference type="eggNOG" id="COG0047">
    <property type="taxonomic scope" value="Bacteria"/>
</dbReference>
<dbReference type="HOGENOM" id="CLU_001031_3_1_7"/>
<dbReference type="OrthoDB" id="9804441at2"/>
<dbReference type="UniPathway" id="UPA00074">
    <property type="reaction ID" value="UER00128"/>
</dbReference>
<dbReference type="Proteomes" id="UP000002714">
    <property type="component" value="Chromosome"/>
</dbReference>
<dbReference type="GO" id="GO:0005737">
    <property type="term" value="C:cytoplasm"/>
    <property type="evidence" value="ECO:0007669"/>
    <property type="project" value="UniProtKB-SubCell"/>
</dbReference>
<dbReference type="GO" id="GO:0005524">
    <property type="term" value="F:ATP binding"/>
    <property type="evidence" value="ECO:0007669"/>
    <property type="project" value="UniProtKB-KW"/>
</dbReference>
<dbReference type="GO" id="GO:0004359">
    <property type="term" value="F:glutaminase activity"/>
    <property type="evidence" value="ECO:0007669"/>
    <property type="project" value="UniProtKB-EC"/>
</dbReference>
<dbReference type="GO" id="GO:0004642">
    <property type="term" value="F:phosphoribosylformylglycinamidine synthase activity"/>
    <property type="evidence" value="ECO:0007669"/>
    <property type="project" value="UniProtKB-UniRule"/>
</dbReference>
<dbReference type="GO" id="GO:0006189">
    <property type="term" value="P:'de novo' IMP biosynthetic process"/>
    <property type="evidence" value="ECO:0007669"/>
    <property type="project" value="UniProtKB-UniRule"/>
</dbReference>
<dbReference type="CDD" id="cd01740">
    <property type="entry name" value="GATase1_FGAR_AT"/>
    <property type="match status" value="1"/>
</dbReference>
<dbReference type="Gene3D" id="3.40.50.880">
    <property type="match status" value="1"/>
</dbReference>
<dbReference type="HAMAP" id="MF_00421">
    <property type="entry name" value="PurQ"/>
    <property type="match status" value="1"/>
</dbReference>
<dbReference type="InterPro" id="IPR029062">
    <property type="entry name" value="Class_I_gatase-like"/>
</dbReference>
<dbReference type="InterPro" id="IPR010075">
    <property type="entry name" value="PRibForGlyAmidine_synth_PurQ"/>
</dbReference>
<dbReference type="NCBIfam" id="TIGR01737">
    <property type="entry name" value="FGAM_synth_I"/>
    <property type="match status" value="1"/>
</dbReference>
<dbReference type="NCBIfam" id="NF002957">
    <property type="entry name" value="PRK03619.1"/>
    <property type="match status" value="1"/>
</dbReference>
<dbReference type="PANTHER" id="PTHR47552">
    <property type="entry name" value="PHOSPHORIBOSYLFORMYLGLYCINAMIDINE SYNTHASE SUBUNIT PURQ"/>
    <property type="match status" value="1"/>
</dbReference>
<dbReference type="PANTHER" id="PTHR47552:SF1">
    <property type="entry name" value="PHOSPHORIBOSYLFORMYLGLYCINAMIDINE SYNTHASE SUBUNIT PURQ"/>
    <property type="match status" value="1"/>
</dbReference>
<dbReference type="Pfam" id="PF13507">
    <property type="entry name" value="GATase_5"/>
    <property type="match status" value="1"/>
</dbReference>
<dbReference type="PIRSF" id="PIRSF001586">
    <property type="entry name" value="FGAM_synth_I"/>
    <property type="match status" value="1"/>
</dbReference>
<dbReference type="SMART" id="SM01211">
    <property type="entry name" value="GATase_5"/>
    <property type="match status" value="1"/>
</dbReference>
<dbReference type="SUPFAM" id="SSF52317">
    <property type="entry name" value="Class I glutamine amidotransferase-like"/>
    <property type="match status" value="1"/>
</dbReference>
<dbReference type="PROSITE" id="PS51273">
    <property type="entry name" value="GATASE_TYPE_1"/>
    <property type="match status" value="1"/>
</dbReference>
<name>PURQ_SULDN</name>
<protein>
    <recommendedName>
        <fullName evidence="1">Phosphoribosylformylglycinamidine synthase subunit PurQ</fullName>
        <shortName evidence="1">FGAM synthase</shortName>
        <ecNumber evidence="1">6.3.5.3</ecNumber>
    </recommendedName>
    <alternativeName>
        <fullName evidence="1">Formylglycinamide ribonucleotide amidotransferase subunit I</fullName>
        <shortName evidence="1">FGAR amidotransferase I</shortName>
        <shortName evidence="1">FGAR-AT I</shortName>
    </alternativeName>
    <alternativeName>
        <fullName evidence="1">Glutaminase PurQ</fullName>
        <ecNumber evidence="1">3.5.1.2</ecNumber>
    </alternativeName>
    <alternativeName>
        <fullName evidence="1">Phosphoribosylformylglycinamidine synthase subunit I</fullName>
    </alternativeName>
</protein>